<name>ETFB_HUMAN</name>
<proteinExistence type="evidence at protein level"/>
<evidence type="ECO:0000250" key="1">
    <source>
        <dbReference type="UniProtKB" id="Q9DCW4"/>
    </source>
</evidence>
<evidence type="ECO:0000269" key="2">
    <source>
    </source>
</evidence>
<evidence type="ECO:0000269" key="3">
    <source>
    </source>
</evidence>
<evidence type="ECO:0000269" key="4">
    <source>
    </source>
</evidence>
<evidence type="ECO:0000269" key="5">
    <source>
    </source>
</evidence>
<evidence type="ECO:0000269" key="6">
    <source>
    </source>
</evidence>
<evidence type="ECO:0000269" key="7">
    <source>
    </source>
</evidence>
<evidence type="ECO:0000269" key="8">
    <source>
    </source>
</evidence>
<evidence type="ECO:0000269" key="9">
    <source>
    </source>
</evidence>
<evidence type="ECO:0000269" key="10">
    <source>
    </source>
</evidence>
<evidence type="ECO:0000269" key="11">
    <source>
    </source>
</evidence>
<evidence type="ECO:0000269" key="12">
    <source>
    </source>
</evidence>
<evidence type="ECO:0000269" key="13">
    <source>
    </source>
</evidence>
<evidence type="ECO:0000303" key="14">
    <source>
    </source>
</evidence>
<evidence type="ECO:0000303" key="15">
    <source>
    </source>
</evidence>
<evidence type="ECO:0000303" key="16">
    <source>
    </source>
</evidence>
<evidence type="ECO:0000303" key="17">
    <source>
    </source>
</evidence>
<evidence type="ECO:0000305" key="18"/>
<evidence type="ECO:0000305" key="19">
    <source>
    </source>
</evidence>
<evidence type="ECO:0000305" key="20">
    <source>
    </source>
</evidence>
<evidence type="ECO:0000312" key="21">
    <source>
        <dbReference type="HGNC" id="HGNC:3482"/>
    </source>
</evidence>
<evidence type="ECO:0007744" key="22">
    <source>
        <dbReference type="PDB" id="1EFV"/>
    </source>
</evidence>
<evidence type="ECO:0007744" key="23">
    <source>
        <dbReference type="PDB" id="1T9G"/>
    </source>
</evidence>
<evidence type="ECO:0007744" key="24">
    <source>
        <dbReference type="PDB" id="2A1T"/>
    </source>
</evidence>
<evidence type="ECO:0007744" key="25">
    <source>
    </source>
</evidence>
<evidence type="ECO:0007744" key="26">
    <source>
    </source>
</evidence>
<evidence type="ECO:0007744" key="27">
    <source>
    </source>
</evidence>
<evidence type="ECO:0007829" key="28">
    <source>
        <dbReference type="PDB" id="1EFV"/>
    </source>
</evidence>
<evidence type="ECO:0007829" key="29">
    <source>
        <dbReference type="PDB" id="1T9G"/>
    </source>
</evidence>
<accession>P38117</accession>
<accession>A8K766</accession>
<accession>B3KNY2</accession>
<accession>Q6IBH7</accession>
<accession>Q71RF6</accession>
<accession>Q9Y3S7</accession>
<gene>
    <name evidence="21" type="primary">ETFB</name>
    <name type="ORF">FP585</name>
</gene>
<feature type="initiator methionine" description="Removed" evidence="27">
    <location>
        <position position="1"/>
    </location>
</feature>
<feature type="chain" id="PRO_0000167870" description="Electron transfer flavoprotein subunit beta">
    <location>
        <begin position="2"/>
        <end position="255"/>
    </location>
</feature>
<feature type="region of interest" description="Recognition loop" evidence="5 8">
    <location>
        <begin position="183"/>
        <end position="205"/>
    </location>
</feature>
<feature type="binding site" evidence="5 7 13 22 23 24">
    <location>
        <position position="9"/>
    </location>
    <ligand>
        <name>AMP</name>
        <dbReference type="ChEBI" id="CHEBI:456215"/>
    </ligand>
</feature>
<feature type="binding site" evidence="5 7 13 22 23 24">
    <location>
        <begin position="39"/>
        <end position="42"/>
    </location>
    <ligand>
        <name>AMP</name>
        <dbReference type="ChEBI" id="CHEBI:456215"/>
    </ligand>
</feature>
<feature type="binding site" evidence="5 7 13 22 23 24">
    <location>
        <position position="66"/>
    </location>
    <ligand>
        <name>AMP</name>
        <dbReference type="ChEBI" id="CHEBI:456215"/>
    </ligand>
</feature>
<feature type="binding site" evidence="5 7 13 22 23 24">
    <location>
        <begin position="123"/>
        <end position="134"/>
    </location>
    <ligand>
        <name>AMP</name>
        <dbReference type="ChEBI" id="CHEBI:456215"/>
    </ligand>
</feature>
<feature type="modified residue" description="N-acetylalanine" evidence="27">
    <location>
        <position position="2"/>
    </location>
</feature>
<feature type="modified residue" description="N6,N6,N6-trimethyllysine; by ETFBKMT; alternate" evidence="8 9">
    <location>
        <position position="200"/>
    </location>
</feature>
<feature type="modified residue" description="N6-acetyllysine; alternate" evidence="1">
    <location>
        <position position="200"/>
    </location>
</feature>
<feature type="modified residue" description="N6-methyllysine; alternate" evidence="25">
    <location>
        <position position="200"/>
    </location>
</feature>
<feature type="modified residue" description="N6,N6,N6-trimethyllysine; by ETFBKMT" evidence="8 9">
    <location>
        <position position="203"/>
    </location>
</feature>
<feature type="modified residue" description="N6-acetyllysine; alternate" evidence="1">
    <location>
        <position position="210"/>
    </location>
</feature>
<feature type="modified residue" description="N6-succinyllysine; alternate" evidence="1">
    <location>
        <position position="210"/>
    </location>
</feature>
<feature type="modified residue" description="Phosphoserine" evidence="26">
    <location>
        <position position="223"/>
    </location>
</feature>
<feature type="modified residue" description="Phosphoserine" evidence="26">
    <location>
        <position position="226"/>
    </location>
</feature>
<feature type="modified residue" description="N6-acetyllysine" evidence="1">
    <location>
        <position position="238"/>
    </location>
</feature>
<feature type="modified residue" description="N6-acetyllysine; alternate" evidence="1">
    <location>
        <position position="248"/>
    </location>
</feature>
<feature type="modified residue" description="N6-succinyllysine; alternate" evidence="1">
    <location>
        <position position="248"/>
    </location>
</feature>
<feature type="splice variant" id="VSP_017850" description="In isoform 2." evidence="14 15">
    <original>MAELRVLVAVKRVIDYAVK</original>
    <variation>MYLSLWVTINTVNLRNTLSGLRGAVTTVGMIKSDVPGTQEWLDERRRQGDLPLPTNSNPVLSLELCDPGQGPAPFQAVVVLIQPGRGLALRPPPSCLFPPDPTPSPPAGQ</variation>
    <location>
        <begin position="1"/>
        <end position="19"/>
    </location>
</feature>
<feature type="sequence variant" id="VAR_025804" description="In GA2B; decreased protein stability; dbSNP:rs104894678." evidence="3">
    <original>D</original>
    <variation>N</variation>
    <location>
        <position position="128"/>
    </location>
</feature>
<feature type="sequence variant" id="VAR_008548" description="In dbSNP:rs1130426." evidence="2 4 6">
    <original>T</original>
    <variation>M</variation>
    <location>
        <position position="154"/>
    </location>
</feature>
<feature type="sequence variant" id="VAR_002369" description="In GA2B; reduced electron transfer activity; dbSNP:rs104894677." evidence="11">
    <original>R</original>
    <variation>Q</variation>
    <location>
        <position position="164"/>
    </location>
</feature>
<feature type="mutagenesis site" description="Drastically increases interprotein electron transfer rates." evidence="7">
    <original>E</original>
    <variation>A</variation>
    <variation>Q</variation>
    <location>
        <position position="165"/>
    </location>
</feature>
<feature type="mutagenesis site" description="Severely impaired in complex formation with ACADM." evidence="5">
    <original>L</original>
    <variation>A</variation>
    <location>
        <position position="195"/>
    </location>
</feature>
<feature type="mutagenesis site" description="Does not abolish electron transfer activity. Abolishes sensitivity to inhibition by lysine methyltransferase ETFBKMT." evidence="9">
    <original>KAKK</original>
    <variation>RAKR</variation>
    <location>
        <begin position="200"/>
        <end position="203"/>
    </location>
</feature>
<feature type="mutagenesis site" description="Does not abolish methylation by ETFBKMT." evidence="9">
    <original>KAK</original>
    <variation>RAR</variation>
    <location>
        <begin position="200"/>
        <end position="202"/>
    </location>
</feature>
<feature type="mutagenesis site" description="Does not abolish electron transfer activity. Decreases sensitivity to inhibition by lysine methyltransferase ETFBKMT." evidence="9">
    <original>K</original>
    <variation>R</variation>
    <location>
        <position position="200"/>
    </location>
</feature>
<feature type="mutagenesis site" description="Does not abolish electron transfer activity. Decreases sensitivity to inhibition by lysine methyltransferase ETFBKMT." evidence="9">
    <original>K</original>
    <variation>R</variation>
    <location>
        <position position="203"/>
    </location>
</feature>
<feature type="sequence conflict" description="In Ref. 7; CAB37832." evidence="18" ref="7">
    <original>I</original>
    <variation>S</variation>
    <location>
        <position position="198"/>
    </location>
</feature>
<feature type="strand" evidence="28">
    <location>
        <begin position="5"/>
        <end position="9"/>
    </location>
</feature>
<feature type="strand" evidence="28">
    <location>
        <begin position="12"/>
        <end position="14"/>
    </location>
</feature>
<feature type="strand" evidence="29">
    <location>
        <begin position="16"/>
        <end position="18"/>
    </location>
</feature>
<feature type="strand" evidence="28">
    <location>
        <begin position="26"/>
        <end position="29"/>
    </location>
</feature>
<feature type="strand" evidence="28">
    <location>
        <begin position="36"/>
        <end position="38"/>
    </location>
</feature>
<feature type="helix" evidence="28">
    <location>
        <begin position="40"/>
        <end position="54"/>
    </location>
</feature>
<feature type="strand" evidence="28">
    <location>
        <begin position="59"/>
        <end position="68"/>
    </location>
</feature>
<feature type="helix" evidence="28">
    <location>
        <begin position="71"/>
        <end position="81"/>
    </location>
</feature>
<feature type="strand" evidence="28">
    <location>
        <begin position="84"/>
        <end position="90"/>
    </location>
</feature>
<feature type="helix" evidence="28">
    <location>
        <begin position="93"/>
        <end position="96"/>
    </location>
</feature>
<feature type="helix" evidence="28">
    <location>
        <begin position="101"/>
        <end position="115"/>
    </location>
</feature>
<feature type="strand" evidence="28">
    <location>
        <begin position="118"/>
        <end position="124"/>
    </location>
</feature>
<feature type="turn" evidence="28">
    <location>
        <begin position="127"/>
        <end position="129"/>
    </location>
</feature>
<feature type="helix" evidence="28">
    <location>
        <begin position="134"/>
        <end position="142"/>
    </location>
</feature>
<feature type="strand" evidence="28">
    <location>
        <begin position="146"/>
        <end position="156"/>
    </location>
</feature>
<feature type="strand" evidence="28">
    <location>
        <begin position="159"/>
        <end position="166"/>
    </location>
</feature>
<feature type="strand" evidence="28">
    <location>
        <begin position="169"/>
        <end position="183"/>
    </location>
</feature>
<feature type="helix" evidence="28">
    <location>
        <begin position="185"/>
        <end position="187"/>
    </location>
</feature>
<feature type="helix" evidence="28">
    <location>
        <begin position="195"/>
        <end position="200"/>
    </location>
</feature>
<feature type="turn" evidence="28">
    <location>
        <begin position="201"/>
        <end position="203"/>
    </location>
</feature>
<feature type="strand" evidence="28">
    <location>
        <begin position="206"/>
        <end position="209"/>
    </location>
</feature>
<feature type="helix" evidence="28">
    <location>
        <begin position="211"/>
        <end position="214"/>
    </location>
</feature>
<feature type="strand" evidence="28">
    <location>
        <begin position="221"/>
        <end position="228"/>
    </location>
</feature>
<feature type="helix" evidence="28">
    <location>
        <begin position="242"/>
        <end position="251"/>
    </location>
</feature>
<dbReference type="EMBL" id="X71129">
    <property type="protein sequence ID" value="CAA50441.1"/>
    <property type="molecule type" value="mRNA"/>
</dbReference>
<dbReference type="EMBL" id="AF436663">
    <property type="protein sequence ID" value="AAN03713.1"/>
    <property type="molecule type" value="Genomic_DNA"/>
</dbReference>
<dbReference type="EMBL" id="AF436658">
    <property type="protein sequence ID" value="AAN03713.1"/>
    <property type="status" value="JOINED"/>
    <property type="molecule type" value="Genomic_DNA"/>
</dbReference>
<dbReference type="EMBL" id="AF436659">
    <property type="protein sequence ID" value="AAN03713.1"/>
    <property type="status" value="JOINED"/>
    <property type="molecule type" value="Genomic_DNA"/>
</dbReference>
<dbReference type="EMBL" id="AF436660">
    <property type="protein sequence ID" value="AAN03713.1"/>
    <property type="status" value="JOINED"/>
    <property type="molecule type" value="Genomic_DNA"/>
</dbReference>
<dbReference type="EMBL" id="AF436661">
    <property type="protein sequence ID" value="AAN03713.1"/>
    <property type="status" value="JOINED"/>
    <property type="molecule type" value="Genomic_DNA"/>
</dbReference>
<dbReference type="EMBL" id="AF436662">
    <property type="protein sequence ID" value="AAN03713.1"/>
    <property type="status" value="JOINED"/>
    <property type="molecule type" value="Genomic_DNA"/>
</dbReference>
<dbReference type="EMBL" id="AF370381">
    <property type="protein sequence ID" value="AAQ15217.1"/>
    <property type="molecule type" value="mRNA"/>
</dbReference>
<dbReference type="EMBL" id="CR456827">
    <property type="protein sequence ID" value="CAG33108.1"/>
    <property type="molecule type" value="mRNA"/>
</dbReference>
<dbReference type="EMBL" id="AK055285">
    <property type="protein sequence ID" value="BAG51494.1"/>
    <property type="molecule type" value="mRNA"/>
</dbReference>
<dbReference type="EMBL" id="AK291881">
    <property type="protein sequence ID" value="BAF84570.1"/>
    <property type="molecule type" value="mRNA"/>
</dbReference>
<dbReference type="EMBL" id="BC093961">
    <property type="protein sequence ID" value="AAH93961.1"/>
    <property type="molecule type" value="mRNA"/>
</dbReference>
<dbReference type="EMBL" id="BC093963">
    <property type="protein sequence ID" value="AAH93963.1"/>
    <property type="molecule type" value="mRNA"/>
</dbReference>
<dbReference type="EMBL" id="X76067">
    <property type="protein sequence ID" value="CAB37832.1"/>
    <property type="molecule type" value="Genomic_DNA"/>
</dbReference>
<dbReference type="CCDS" id="CCDS12828.1">
    <molecule id="P38117-1"/>
</dbReference>
<dbReference type="CCDS" id="CCDS33085.1">
    <molecule id="P38117-2"/>
</dbReference>
<dbReference type="PIR" id="S32482">
    <property type="entry name" value="S32482"/>
</dbReference>
<dbReference type="RefSeq" id="NP_001014763.1">
    <molecule id="P38117-2"/>
    <property type="nucleotide sequence ID" value="NM_001014763.1"/>
</dbReference>
<dbReference type="RefSeq" id="NP_001976.1">
    <molecule id="P38117-1"/>
    <property type="nucleotide sequence ID" value="NM_001985.3"/>
</dbReference>
<dbReference type="PDB" id="1EFV">
    <property type="method" value="X-ray"/>
    <property type="resolution" value="2.10 A"/>
    <property type="chains" value="B=1-255"/>
</dbReference>
<dbReference type="PDB" id="1T9G">
    <property type="method" value="X-ray"/>
    <property type="resolution" value="2.90 A"/>
    <property type="chains" value="S=1-255"/>
</dbReference>
<dbReference type="PDB" id="2A1T">
    <property type="method" value="X-ray"/>
    <property type="resolution" value="2.80 A"/>
    <property type="chains" value="S=1-255"/>
</dbReference>
<dbReference type="PDB" id="2A1U">
    <property type="method" value="X-ray"/>
    <property type="resolution" value="2.11 A"/>
    <property type="chains" value="B=1-255"/>
</dbReference>
<dbReference type="PDBsum" id="1EFV"/>
<dbReference type="PDBsum" id="1T9G"/>
<dbReference type="PDBsum" id="2A1T"/>
<dbReference type="PDBsum" id="2A1U"/>
<dbReference type="SMR" id="P38117"/>
<dbReference type="BioGRID" id="108410">
    <property type="interactions" value="182"/>
</dbReference>
<dbReference type="ComplexPortal" id="CPX-2731">
    <property type="entry name" value="Mitochondrial electron transfer flavoprotein complex"/>
</dbReference>
<dbReference type="DIP" id="DIP-6162N"/>
<dbReference type="FunCoup" id="P38117">
    <property type="interactions" value="1467"/>
</dbReference>
<dbReference type="IntAct" id="P38117">
    <property type="interactions" value="75"/>
</dbReference>
<dbReference type="MINT" id="P38117"/>
<dbReference type="STRING" id="9606.ENSP00000346173"/>
<dbReference type="ChEMBL" id="CHEMBL4105744"/>
<dbReference type="GlyGen" id="P38117">
    <property type="glycosylation" value="2 sites, 1 O-linked glycan (2 sites)"/>
</dbReference>
<dbReference type="iPTMnet" id="P38117"/>
<dbReference type="PhosphoSitePlus" id="P38117"/>
<dbReference type="SwissPalm" id="P38117"/>
<dbReference type="BioMuta" id="ETFB"/>
<dbReference type="REPRODUCTION-2DPAGE" id="IPI00004902"/>
<dbReference type="CPTAC" id="CPTAC-504"/>
<dbReference type="CPTAC" id="CPTAC-505"/>
<dbReference type="jPOST" id="P38117"/>
<dbReference type="MassIVE" id="P38117"/>
<dbReference type="PaxDb" id="9606-ENSP00000346173"/>
<dbReference type="PeptideAtlas" id="P38117"/>
<dbReference type="ProteomicsDB" id="55282">
    <molecule id="P38117-1"/>
</dbReference>
<dbReference type="ProteomicsDB" id="55283">
    <molecule id="P38117-2"/>
</dbReference>
<dbReference type="Pumba" id="P38117"/>
<dbReference type="TopDownProteomics" id="P38117-1">
    <molecule id="P38117-1"/>
</dbReference>
<dbReference type="TopDownProteomics" id="P38117-2">
    <molecule id="P38117-2"/>
</dbReference>
<dbReference type="Antibodypedia" id="19013">
    <property type="antibodies" value="251 antibodies from 34 providers"/>
</dbReference>
<dbReference type="DNASU" id="2109"/>
<dbReference type="Ensembl" id="ENST00000309244.9">
    <molecule id="P38117-1"/>
    <property type="protein sequence ID" value="ENSP00000311930.3"/>
    <property type="gene ID" value="ENSG00000105379.10"/>
</dbReference>
<dbReference type="Ensembl" id="ENST00000354232.8">
    <molecule id="P38117-2"/>
    <property type="protein sequence ID" value="ENSP00000346173.3"/>
    <property type="gene ID" value="ENSG00000105379.10"/>
</dbReference>
<dbReference type="GeneID" id="2109"/>
<dbReference type="KEGG" id="hsa:2109"/>
<dbReference type="MANE-Select" id="ENST00000309244.9">
    <property type="protein sequence ID" value="ENSP00000311930.3"/>
    <property type="RefSeq nucleotide sequence ID" value="NM_001985.3"/>
    <property type="RefSeq protein sequence ID" value="NP_001976.1"/>
</dbReference>
<dbReference type="UCSC" id="uc002pwg.4">
    <molecule id="P38117-1"/>
    <property type="organism name" value="human"/>
</dbReference>
<dbReference type="AGR" id="HGNC:3482"/>
<dbReference type="CTD" id="2109"/>
<dbReference type="DisGeNET" id="2109"/>
<dbReference type="GeneCards" id="ETFB"/>
<dbReference type="GeneReviews" id="ETFB"/>
<dbReference type="HGNC" id="HGNC:3482">
    <property type="gene designation" value="ETFB"/>
</dbReference>
<dbReference type="HPA" id="ENSG00000105379">
    <property type="expression patterns" value="Tissue enhanced (liver)"/>
</dbReference>
<dbReference type="MalaCards" id="ETFB"/>
<dbReference type="MIM" id="130410">
    <property type="type" value="gene"/>
</dbReference>
<dbReference type="MIM" id="231680">
    <property type="type" value="phenotype"/>
</dbReference>
<dbReference type="neXtProt" id="NX_P38117"/>
<dbReference type="OpenTargets" id="ENSG00000105379"/>
<dbReference type="Orphanet" id="394532">
    <property type="disease" value="Multiple acyl-CoA dehydrogenase deficiency, mild type"/>
</dbReference>
<dbReference type="Orphanet" id="394529">
    <property type="disease" value="Multiple acyl-CoA dehydrogenase deficiency, severe neonatal type"/>
</dbReference>
<dbReference type="PharmGKB" id="PA27898"/>
<dbReference type="VEuPathDB" id="HostDB:ENSG00000105379"/>
<dbReference type="eggNOG" id="KOG3180">
    <property type="taxonomic scope" value="Eukaryota"/>
</dbReference>
<dbReference type="GeneTree" id="ENSGT00390000009936"/>
<dbReference type="HOGENOM" id="CLU_060196_0_0_1"/>
<dbReference type="InParanoid" id="P38117"/>
<dbReference type="OMA" id="EINQPRI"/>
<dbReference type="OrthoDB" id="276685at2759"/>
<dbReference type="PAN-GO" id="P38117">
    <property type="GO annotations" value="1 GO annotation based on evolutionary models"/>
</dbReference>
<dbReference type="PhylomeDB" id="P38117"/>
<dbReference type="TreeFam" id="TF314039"/>
<dbReference type="PathwayCommons" id="P38117"/>
<dbReference type="Reactome" id="R-HSA-611105">
    <property type="pathway name" value="Respiratory electron transport"/>
</dbReference>
<dbReference type="Reactome" id="R-HSA-8876725">
    <property type="pathway name" value="Protein methylation"/>
</dbReference>
<dbReference type="SignaLink" id="P38117"/>
<dbReference type="SIGNOR" id="P38117"/>
<dbReference type="BioGRID-ORCS" id="2109">
    <property type="hits" value="211 hits in 1155 CRISPR screens"/>
</dbReference>
<dbReference type="ChiTaRS" id="ETFB">
    <property type="organism name" value="human"/>
</dbReference>
<dbReference type="EvolutionaryTrace" id="P38117"/>
<dbReference type="GeneWiki" id="ETFB"/>
<dbReference type="GenomeRNAi" id="2109"/>
<dbReference type="Pharos" id="P38117">
    <property type="development level" value="Tchem"/>
</dbReference>
<dbReference type="PRO" id="PR:P38117"/>
<dbReference type="Proteomes" id="UP000005640">
    <property type="component" value="Chromosome 19"/>
</dbReference>
<dbReference type="RNAct" id="P38117">
    <property type="molecule type" value="protein"/>
</dbReference>
<dbReference type="Bgee" id="ENSG00000105379">
    <property type="expression patterns" value="Expressed in apex of heart and 205 other cell types or tissues"/>
</dbReference>
<dbReference type="ExpressionAtlas" id="P38117">
    <property type="expression patterns" value="baseline and differential"/>
</dbReference>
<dbReference type="GO" id="GO:0045251">
    <property type="term" value="C:electron transfer flavoprotein complex"/>
    <property type="evidence" value="ECO:0000353"/>
    <property type="project" value="ComplexPortal"/>
</dbReference>
<dbReference type="GO" id="GO:0005759">
    <property type="term" value="C:mitochondrial matrix"/>
    <property type="evidence" value="ECO:0000314"/>
    <property type="project" value="UniProtKB"/>
</dbReference>
<dbReference type="GO" id="GO:0005739">
    <property type="term" value="C:mitochondrion"/>
    <property type="evidence" value="ECO:0000314"/>
    <property type="project" value="HPA"/>
</dbReference>
<dbReference type="GO" id="GO:0009055">
    <property type="term" value="F:electron transfer activity"/>
    <property type="evidence" value="ECO:0000314"/>
    <property type="project" value="UniProtKB"/>
</dbReference>
<dbReference type="GO" id="GO:0009063">
    <property type="term" value="P:amino acid catabolic process"/>
    <property type="evidence" value="ECO:0000314"/>
    <property type="project" value="ComplexPortal"/>
</dbReference>
<dbReference type="GO" id="GO:0033539">
    <property type="term" value="P:fatty acid beta-oxidation using acyl-CoA dehydrogenase"/>
    <property type="evidence" value="ECO:0000314"/>
    <property type="project" value="UniProtKB"/>
</dbReference>
<dbReference type="GO" id="GO:0022904">
    <property type="term" value="P:respiratory electron transport chain"/>
    <property type="evidence" value="ECO:0000314"/>
    <property type="project" value="ComplexPortal"/>
</dbReference>
<dbReference type="CDD" id="cd01714">
    <property type="entry name" value="ETF_beta"/>
    <property type="match status" value="1"/>
</dbReference>
<dbReference type="FunFam" id="3.40.50.620:FF:000011">
    <property type="entry name" value="Electron transfer flavoprotein subunit beta"/>
    <property type="match status" value="1"/>
</dbReference>
<dbReference type="Gene3D" id="3.40.50.620">
    <property type="entry name" value="HUPs"/>
    <property type="match status" value="1"/>
</dbReference>
<dbReference type="InterPro" id="IPR000049">
    <property type="entry name" value="ET-Flavoprotein_bsu_CS"/>
</dbReference>
<dbReference type="InterPro" id="IPR014730">
    <property type="entry name" value="ETF_a/b_N"/>
</dbReference>
<dbReference type="InterPro" id="IPR012255">
    <property type="entry name" value="ETF_b"/>
</dbReference>
<dbReference type="InterPro" id="IPR033948">
    <property type="entry name" value="ETF_beta_N"/>
</dbReference>
<dbReference type="InterPro" id="IPR014729">
    <property type="entry name" value="Rossmann-like_a/b/a_fold"/>
</dbReference>
<dbReference type="PANTHER" id="PTHR21294">
    <property type="entry name" value="ELECTRON TRANSFER FLAVOPROTEIN BETA-SUBUNIT"/>
    <property type="match status" value="1"/>
</dbReference>
<dbReference type="PANTHER" id="PTHR21294:SF8">
    <property type="entry name" value="ELECTRON TRANSFER FLAVOPROTEIN SUBUNIT BETA"/>
    <property type="match status" value="1"/>
</dbReference>
<dbReference type="Pfam" id="PF01012">
    <property type="entry name" value="ETF"/>
    <property type="match status" value="1"/>
</dbReference>
<dbReference type="PIRSF" id="PIRSF000090">
    <property type="entry name" value="Beta-ETF"/>
    <property type="match status" value="1"/>
</dbReference>
<dbReference type="SMART" id="SM00893">
    <property type="entry name" value="ETF"/>
    <property type="match status" value="1"/>
</dbReference>
<dbReference type="SUPFAM" id="SSF52402">
    <property type="entry name" value="Adenine nucleotide alpha hydrolases-like"/>
    <property type="match status" value="1"/>
</dbReference>
<dbReference type="PROSITE" id="PS01065">
    <property type="entry name" value="ETF_BETA"/>
    <property type="match status" value="1"/>
</dbReference>
<sequence>MAELRVLVAVKRVIDYAVKIRVKPDRTGVVTDGVKHSMNPFCEIAVEEAVRLKEKKLVKEVIAVSCGPAQCQETIRTALAMGADRGIHVEVPPAEAERLGPLQVARVLAKLAEKEKVDLVLLGKQAIDDDCNQTGQMTAGFLDWPQGTFASQVTLEGDKLKVEREIDGGLETLRLKLPAVVTADLRLNEPRYATLPNIMKAKKKKIEVIKPGDLGVDLTSKLSVISVEDPPQRTAGVKVETTEDLVAKLKEIGRI</sequence>
<protein>
    <recommendedName>
        <fullName evidence="18">Electron transfer flavoprotein subunit beta</fullName>
        <shortName evidence="17">Beta-ETF</shortName>
    </recommendedName>
</protein>
<reference key="1">
    <citation type="journal article" date="1993" name="Eur. J. Biochem.">
        <title>cDNA cloning and mitochondrial import of the beta-subunit of the human electron-transfer flavoprotein.</title>
        <authorList>
            <person name="Finocchiaro G."/>
            <person name="Colombo I."/>
            <person name="Garavaglia B."/>
            <person name="Gellera C."/>
            <person name="Valdameri G."/>
            <person name="Garbuglio N."/>
            <person name="Didonato S."/>
        </authorList>
    </citation>
    <scope>NUCLEOTIDE SEQUENCE [MRNA] (ISOFORM 1)</scope>
    <scope>SUBCELLULAR LOCATION</scope>
    <scope>TISSUE SPECIFICITY</scope>
    <source>
        <tissue>Fetal liver</tissue>
    </source>
</reference>
<reference key="2">
    <citation type="journal article" date="2003" name="Hum. Mutat.">
        <title>Clear relationship between ETF/ETFDH genotype and phenotype in patients with multiple acyl-CoA dehydrogenation deficiency.</title>
        <authorList>
            <person name="Olsen R.K.J."/>
            <person name="Andresen B.S."/>
            <person name="Christensen E."/>
            <person name="Bross P."/>
            <person name="Skovby F."/>
            <person name="Gregersen N."/>
        </authorList>
    </citation>
    <scope>NUCLEOTIDE SEQUENCE [GENOMIC DNA]</scope>
    <scope>VARIANT GA2B ASN-128</scope>
    <scope>CHARACTERIZATION OF VARIANT GA2B ASN-128</scope>
    <scope>FUNCTION</scope>
</reference>
<reference key="3">
    <citation type="journal article" date="2004" name="Proc. Natl. Acad. Sci. U.S.A.">
        <title>Large-scale cDNA transfection screening for genes related to cancer development and progression.</title>
        <authorList>
            <person name="Wan D."/>
            <person name="Gong Y."/>
            <person name="Qin W."/>
            <person name="Zhang P."/>
            <person name="Li J."/>
            <person name="Wei L."/>
            <person name="Zhou X."/>
            <person name="Li H."/>
            <person name="Qiu X."/>
            <person name="Zhong F."/>
            <person name="He L."/>
            <person name="Yu J."/>
            <person name="Yao G."/>
            <person name="Jiang H."/>
            <person name="Qian L."/>
            <person name="Yu Y."/>
            <person name="Shu H."/>
            <person name="Chen X."/>
            <person name="Xu H."/>
            <person name="Guo M."/>
            <person name="Pan Z."/>
            <person name="Chen Y."/>
            <person name="Ge C."/>
            <person name="Yang S."/>
            <person name="Gu J."/>
        </authorList>
    </citation>
    <scope>NUCLEOTIDE SEQUENCE [LARGE SCALE MRNA] (ISOFORM 2)</scope>
    <scope>VARIANT MET-154</scope>
</reference>
<reference key="4">
    <citation type="submission" date="2004-06" db="EMBL/GenBank/DDBJ databases">
        <title>Cloning of human full open reading frames in Gateway(TM) system entry vector (pDONR201).</title>
        <authorList>
            <person name="Ebert L."/>
            <person name="Schick M."/>
            <person name="Neubert P."/>
            <person name="Schatten R."/>
            <person name="Henze S."/>
            <person name="Korn B."/>
        </authorList>
    </citation>
    <scope>NUCLEOTIDE SEQUENCE [LARGE SCALE MRNA] (ISOFORM 1)</scope>
</reference>
<reference key="5">
    <citation type="journal article" date="2004" name="Nat. Genet.">
        <title>Complete sequencing and characterization of 21,243 full-length human cDNAs.</title>
        <authorList>
            <person name="Ota T."/>
            <person name="Suzuki Y."/>
            <person name="Nishikawa T."/>
            <person name="Otsuki T."/>
            <person name="Sugiyama T."/>
            <person name="Irie R."/>
            <person name="Wakamatsu A."/>
            <person name="Hayashi K."/>
            <person name="Sato H."/>
            <person name="Nagai K."/>
            <person name="Kimura K."/>
            <person name="Makita H."/>
            <person name="Sekine M."/>
            <person name="Obayashi M."/>
            <person name="Nishi T."/>
            <person name="Shibahara T."/>
            <person name="Tanaka T."/>
            <person name="Ishii S."/>
            <person name="Yamamoto J."/>
            <person name="Saito K."/>
            <person name="Kawai Y."/>
            <person name="Isono Y."/>
            <person name="Nakamura Y."/>
            <person name="Nagahari K."/>
            <person name="Murakami K."/>
            <person name="Yasuda T."/>
            <person name="Iwayanagi T."/>
            <person name="Wagatsuma M."/>
            <person name="Shiratori A."/>
            <person name="Sudo H."/>
            <person name="Hosoiri T."/>
            <person name="Kaku Y."/>
            <person name="Kodaira H."/>
            <person name="Kondo H."/>
            <person name="Sugawara M."/>
            <person name="Takahashi M."/>
            <person name="Kanda K."/>
            <person name="Yokoi T."/>
            <person name="Furuya T."/>
            <person name="Kikkawa E."/>
            <person name="Omura Y."/>
            <person name="Abe K."/>
            <person name="Kamihara K."/>
            <person name="Katsuta N."/>
            <person name="Sato K."/>
            <person name="Tanikawa M."/>
            <person name="Yamazaki M."/>
            <person name="Ninomiya K."/>
            <person name="Ishibashi T."/>
            <person name="Yamashita H."/>
            <person name="Murakawa K."/>
            <person name="Fujimori K."/>
            <person name="Tanai H."/>
            <person name="Kimata M."/>
            <person name="Watanabe M."/>
            <person name="Hiraoka S."/>
            <person name="Chiba Y."/>
            <person name="Ishida S."/>
            <person name="Ono Y."/>
            <person name="Takiguchi S."/>
            <person name="Watanabe S."/>
            <person name="Yosida M."/>
            <person name="Hotuta T."/>
            <person name="Kusano J."/>
            <person name="Kanehori K."/>
            <person name="Takahashi-Fujii A."/>
            <person name="Hara H."/>
            <person name="Tanase T.-O."/>
            <person name="Nomura Y."/>
            <person name="Togiya S."/>
            <person name="Komai F."/>
            <person name="Hara R."/>
            <person name="Takeuchi K."/>
            <person name="Arita M."/>
            <person name="Imose N."/>
            <person name="Musashino K."/>
            <person name="Yuuki H."/>
            <person name="Oshima A."/>
            <person name="Sasaki N."/>
            <person name="Aotsuka S."/>
            <person name="Yoshikawa Y."/>
            <person name="Matsunawa H."/>
            <person name="Ichihara T."/>
            <person name="Shiohata N."/>
            <person name="Sano S."/>
            <person name="Moriya S."/>
            <person name="Momiyama H."/>
            <person name="Satoh N."/>
            <person name="Takami S."/>
            <person name="Terashima Y."/>
            <person name="Suzuki O."/>
            <person name="Nakagawa S."/>
            <person name="Senoh A."/>
            <person name="Mizoguchi H."/>
            <person name="Goto Y."/>
            <person name="Shimizu F."/>
            <person name="Wakebe H."/>
            <person name="Hishigaki H."/>
            <person name="Watanabe T."/>
            <person name="Sugiyama A."/>
            <person name="Takemoto M."/>
            <person name="Kawakami B."/>
            <person name="Yamazaki M."/>
            <person name="Watanabe K."/>
            <person name="Kumagai A."/>
            <person name="Itakura S."/>
            <person name="Fukuzumi Y."/>
            <person name="Fujimori Y."/>
            <person name="Komiyama M."/>
            <person name="Tashiro H."/>
            <person name="Tanigami A."/>
            <person name="Fujiwara T."/>
            <person name="Ono T."/>
            <person name="Yamada K."/>
            <person name="Fujii Y."/>
            <person name="Ozaki K."/>
            <person name="Hirao M."/>
            <person name="Ohmori Y."/>
            <person name="Kawabata A."/>
            <person name="Hikiji T."/>
            <person name="Kobatake N."/>
            <person name="Inagaki H."/>
            <person name="Ikema Y."/>
            <person name="Okamoto S."/>
            <person name="Okitani R."/>
            <person name="Kawakami T."/>
            <person name="Noguchi S."/>
            <person name="Itoh T."/>
            <person name="Shigeta K."/>
            <person name="Senba T."/>
            <person name="Matsumura K."/>
            <person name="Nakajima Y."/>
            <person name="Mizuno T."/>
            <person name="Morinaga M."/>
            <person name="Sasaki M."/>
            <person name="Togashi T."/>
            <person name="Oyama M."/>
            <person name="Hata H."/>
            <person name="Watanabe M."/>
            <person name="Komatsu T."/>
            <person name="Mizushima-Sugano J."/>
            <person name="Satoh T."/>
            <person name="Shirai Y."/>
            <person name="Takahashi Y."/>
            <person name="Nakagawa K."/>
            <person name="Okumura K."/>
            <person name="Nagase T."/>
            <person name="Nomura N."/>
            <person name="Kikuchi H."/>
            <person name="Masuho Y."/>
            <person name="Yamashita R."/>
            <person name="Nakai K."/>
            <person name="Yada T."/>
            <person name="Nakamura Y."/>
            <person name="Ohara O."/>
            <person name="Isogai T."/>
            <person name="Sugano S."/>
        </authorList>
    </citation>
    <scope>NUCLEOTIDE SEQUENCE [LARGE SCALE MRNA] (ISOFORMS 1 AND 2)</scope>
    <scope>VARIANT MET-154</scope>
    <source>
        <tissue>Brain</tissue>
        <tissue>Skeletal muscle</tissue>
    </source>
</reference>
<reference key="6">
    <citation type="journal article" date="2004" name="Genome Res.">
        <title>The status, quality, and expansion of the NIH full-length cDNA project: the Mammalian Gene Collection (MGC).</title>
        <authorList>
            <consortium name="The MGC Project Team"/>
        </authorList>
    </citation>
    <scope>NUCLEOTIDE SEQUENCE [LARGE SCALE MRNA] (ISOFORM 1)</scope>
    <source>
        <tissue>Cerebellum</tissue>
    </source>
</reference>
<reference key="7">
    <citation type="journal article" date="1994" name="Hum. Mol. Genet.">
        <title>Mutations and polymorphisms of the gene encoding the beta-subunit of the electron transfer flavoprotein in three patients with glutaric acidemia type II.</title>
        <authorList>
            <person name="Colombo I."/>
            <person name="Finocchiaro G."/>
            <person name="Garavaglia B."/>
            <person name="Garbuglio N."/>
            <person name="Yamaguchi S."/>
            <person name="Frerman F."/>
            <person name="Berra B."/>
            <person name="Didonato S."/>
        </authorList>
    </citation>
    <scope>NUCLEOTIDE SEQUENCE [GENOMIC DNA] OF 147-199</scope>
    <scope>VARIANT GA2B GLN-164</scope>
    <scope>CHARACTERIZATION OF VARIANT GA2B GLN-164</scope>
    <scope>FUNCTION</scope>
</reference>
<reference key="8">
    <citation type="journal article" date="2007" name="FEBS J.">
        <title>Dynamics driving function: new insights from electron transferring flavoproteins and partner complexes.</title>
        <authorList>
            <person name="Toogood H.S."/>
            <person name="Leys D."/>
            <person name="Scrutton N.S."/>
        </authorList>
    </citation>
    <scope>REVIEW</scope>
</reference>
<reference key="9">
    <citation type="journal article" date="2011" name="BMC Syst. Biol.">
        <title>Initial characterization of the human central proteome.</title>
        <authorList>
            <person name="Burkard T.R."/>
            <person name="Planyavsky M."/>
            <person name="Kaupe I."/>
            <person name="Breitwieser F.P."/>
            <person name="Buerckstuemmer T."/>
            <person name="Bennett K.L."/>
            <person name="Superti-Furga G."/>
            <person name="Colinge J."/>
        </authorList>
    </citation>
    <scope>IDENTIFICATION BY MASS SPECTROMETRY [LARGE SCALE ANALYSIS]</scope>
</reference>
<reference key="10">
    <citation type="journal article" date="2014" name="J. Biol. Chem.">
        <title>Human METTL20 methylates lysine residues adjacent to the recognition loop of the electron transfer flavoprotein in mitochondria.</title>
        <authorList>
            <person name="Rhein V.F."/>
            <person name="Carroll J."/>
            <person name="He J."/>
            <person name="Ding S."/>
            <person name="Fearnley I.M."/>
            <person name="Walker J.E."/>
        </authorList>
    </citation>
    <scope>SUBCELLULAR LOCATION</scope>
    <scope>SUBUNIT</scope>
    <scope>METHYLATION AT LYS-200 AND LYS-203</scope>
</reference>
<reference key="11">
    <citation type="journal article" date="2014" name="J. Proteomics">
        <title>An enzyme assisted RP-RPLC approach for in-depth analysis of human liver phosphoproteome.</title>
        <authorList>
            <person name="Bian Y."/>
            <person name="Song C."/>
            <person name="Cheng K."/>
            <person name="Dong M."/>
            <person name="Wang F."/>
            <person name="Huang J."/>
            <person name="Sun D."/>
            <person name="Wang L."/>
            <person name="Ye M."/>
            <person name="Zou H."/>
        </authorList>
    </citation>
    <scope>PHOSPHORYLATION [LARGE SCALE ANALYSIS] AT SER-223 AND SER-226</scope>
    <scope>IDENTIFICATION BY MASS SPECTROMETRY [LARGE SCALE ANALYSIS]</scope>
    <source>
        <tissue>Liver</tissue>
    </source>
</reference>
<reference key="12">
    <citation type="journal article" date="2014" name="Mol. Cell. Proteomics">
        <title>Immunoaffinity enrichment and mass spectrometry analysis of protein methylation.</title>
        <authorList>
            <person name="Guo A."/>
            <person name="Gu H."/>
            <person name="Zhou J."/>
            <person name="Mulhern D."/>
            <person name="Wang Y."/>
            <person name="Lee K.A."/>
            <person name="Yang V."/>
            <person name="Aguiar M."/>
            <person name="Kornhauser J."/>
            <person name="Jia X."/>
            <person name="Ren J."/>
            <person name="Beausoleil S.A."/>
            <person name="Silva J.C."/>
            <person name="Vemulapalli V."/>
            <person name="Bedford M.T."/>
            <person name="Comb M.J."/>
        </authorList>
    </citation>
    <scope>METHYLATION [LARGE SCALE ANALYSIS] AT LYS-200</scope>
    <scope>IDENTIFICATION BY MASS SPECTROMETRY [LARGE SCALE ANALYSIS]</scope>
    <source>
        <tissue>Colon carcinoma</tissue>
    </source>
</reference>
<reference key="13">
    <citation type="journal article" date="2015" name="J. Biol. Chem.">
        <title>Human METTL20 is a mitochondrial lysine methyltransferase that targets the beta subunit of electron transfer flavoprotein (ETFbeta) and modulates its activity.</title>
        <authorList>
            <person name="Malecki J."/>
            <person name="Ho A.Y."/>
            <person name="Moen A."/>
            <person name="Dahl H.A."/>
            <person name="Falnes P.O."/>
        </authorList>
    </citation>
    <scope>FUNCTION</scope>
    <scope>SUBUNIT</scope>
    <scope>METHYLATION AT LYS-200 AND LYS-203</scope>
    <scope>IDENTIFICATION BY MASS SPECTROMETRY</scope>
    <scope>MUTAGENESIS OF 200-LYS--LYS-202; 200-LYS--LYS-203; LYS-200 AND LYS-203</scope>
</reference>
<reference key="14">
    <citation type="journal article" date="2015" name="Proteomics">
        <title>N-terminome analysis of the human mitochondrial proteome.</title>
        <authorList>
            <person name="Vaca Jacome A.S."/>
            <person name="Rabilloud T."/>
            <person name="Schaeffer-Reiss C."/>
            <person name="Rompais M."/>
            <person name="Ayoub D."/>
            <person name="Lane L."/>
            <person name="Bairoch A."/>
            <person name="Van Dorsselaer A."/>
            <person name="Carapito C."/>
        </authorList>
    </citation>
    <scope>ACETYLATION [LARGE SCALE ANALYSIS] AT ALA-2</scope>
    <scope>CLEAVAGE OF INITIATOR METHIONINE [LARGE SCALE ANALYSIS]</scope>
    <scope>IDENTIFICATION BY MASS SPECTROMETRY [LARGE SCALE ANALYSIS]</scope>
</reference>
<reference key="15">
    <citation type="journal article" date="2016" name="Mol. Cell">
        <title>Mitochondrial protein interaction mapping identifies regulators of respiratory chain function.</title>
        <authorList>
            <person name="Floyd B.J."/>
            <person name="Wilkerson E.M."/>
            <person name="Veling M.T."/>
            <person name="Minogue C.E."/>
            <person name="Xia C."/>
            <person name="Beebe E.T."/>
            <person name="Wrobel R.L."/>
            <person name="Cho H."/>
            <person name="Kremer L.S."/>
            <person name="Alston C.L."/>
            <person name="Gromek K.A."/>
            <person name="Dolan B.K."/>
            <person name="Ulbrich A."/>
            <person name="Stefely J.A."/>
            <person name="Bohl S.L."/>
            <person name="Werner K.M."/>
            <person name="Jochem A."/>
            <person name="Westphall M.S."/>
            <person name="Rensvold J.W."/>
            <person name="Taylor R.W."/>
            <person name="Prokisch H."/>
            <person name="Kim J.J."/>
            <person name="Coon J.J."/>
            <person name="Pagliarini D.J."/>
        </authorList>
    </citation>
    <scope>INTERACTION WITH ETFRF1</scope>
    <scope>IDENTIFICATION IN A COMPLEX WITH ETFA AND ETFRF1</scope>
</reference>
<reference key="16">
    <citation type="journal article" date="1996" name="Proc. Natl. Acad. Sci. U.S.A.">
        <title>Three-dimensional structure of human electron transfer flavoprotein to 2.1-A resolution.</title>
        <authorList>
            <person name="Roberts D.L."/>
            <person name="Frerman F.E."/>
            <person name="Kim J.-J.P."/>
        </authorList>
    </citation>
    <scope>X-RAY CRYSTALLOGRAPHY (2.1 ANGSTROMS) IN COMPLEX WITH ETFA AND AMP</scope>
    <scope>FUNCTION</scope>
    <scope>SUBUNIT</scope>
</reference>
<reference key="17">
    <citation type="journal article" date="2004" name="J. Biol. Chem.">
        <title>Extensive domain motion and electron transfer in the human electron transferring flavoprotein.medium chain acyl-CoA dehydrogenase complex.</title>
        <authorList>
            <person name="Toogood H.S."/>
            <person name="van Thiel A."/>
            <person name="Basran J."/>
            <person name="Sutcliffe M.J."/>
            <person name="Scrutton N.S."/>
            <person name="Leys D."/>
        </authorList>
    </citation>
    <scope>X-RAY CRYSTALLOGRAPHY (2.9 ANGSTROMS) IN COMPLEX WITH AMP; ETFA AND ACADM</scope>
    <scope>FUNCTION</scope>
    <scope>SUBUNIT</scope>
    <scope>MUTAGENESIS OF LEU-195</scope>
</reference>
<reference key="18">
    <citation type="journal article" date="2005" name="J. Biol. Chem.">
        <title>Stabilization of non-productive conformations underpins rapid electron transfer to electron-transferring flavoprotein.</title>
        <authorList>
            <person name="Toogood H.S."/>
            <person name="van Thiel A."/>
            <person name="Scrutton N.S."/>
            <person name="Leys D."/>
        </authorList>
    </citation>
    <scope>X-RAY CRYSTALLOGRAPHY (2.11 ANGSTROMS) OF MUTANT ALA-165 IN COMPLEX WITH AMP; ETFA AND ACADM</scope>
    <scope>FUNCTION</scope>
    <scope>SUBUNIT</scope>
    <scope>MUTAGENESIS OF GLU-165</scope>
</reference>
<reference key="19">
    <citation type="journal article" date="1999" name="Mol. Genet. Metab.">
        <title>A polymorphic variant in the human electron transfer flavoprotein alpha-chain (alpha-T171) displays decreased thermal stability and is overrepresented in very-long-chain acyl-CoA dehydrogenase-deficient patients with mild childhood presentation.</title>
        <authorList>
            <person name="Bross P."/>
            <person name="Pedersen P."/>
            <person name="Winter V."/>
            <person name="Nyholm M."/>
            <person name="Johansen B.N."/>
            <person name="Olsen R.K."/>
            <person name="Corydon M.J."/>
            <person name="Andresen B.S."/>
            <person name="Eiberg H."/>
            <person name="Kolvraa S."/>
            <person name="Gregersen N."/>
        </authorList>
    </citation>
    <scope>VARIANT MET-154</scope>
</reference>
<comment type="function">
    <text evidence="3 5 7 9 11 13 16 18">Heterodimeric electron transfer flavoprotein that accepts electrons from several mitochondrial dehydrogenases, including acyl-CoA dehydrogenases, glutaryl-CoA and sarcosine dehydrogenase (PubMed:15159392, PubMed:15975918, PubMed:25416781). It transfers the electrons to the main mitochondrial respiratory chain via ETF-ubiquinone oxidoreductase (Probable). Required for normal mitochondrial fatty acid oxidation and normal amino acid metabolism (PubMed:12815589, PubMed:7912128). ETFB binds an AMP molecule that probably has a purely structural role (PubMed:15159392, PubMed:15975918, PubMed:8962055).</text>
</comment>
<comment type="subunit">
    <text evidence="5 7 8 9 10 13">Heterodimer composed of ETFA and ETFB (PubMed:15159392, PubMed:15975918, PubMed:25023281, PubMed:25416781, PubMed:8962055). Identified in a complex that contains ETFA, ETFB and ETFRF1 (PubMed:27499296). Interacts with ACADM (PubMed:15159392, PubMed:15975918).</text>
</comment>
<comment type="interaction">
    <interactant intactId="EBI-1056543">
        <id>P38117</id>
    </interactant>
    <interactant intactId="EBI-1052886">
        <id>P13804</id>
        <label>ETFA</label>
    </interactant>
    <organismsDiffer>false</organismsDiffer>
    <experiments>4</experiments>
</comment>
<comment type="interaction">
    <interactant intactId="EBI-1056543">
        <id>P38117</id>
    </interactant>
    <interactant intactId="EBI-12292149">
        <id>Q6IPR1</id>
        <label>ETFRF1</label>
    </interactant>
    <organismsDiffer>false</organismsDiffer>
    <experiments>9</experiments>
</comment>
<comment type="subcellular location">
    <subcellularLocation>
        <location evidence="19 20">Mitochondrion matrix</location>
    </subcellularLocation>
</comment>
<comment type="alternative products">
    <event type="alternative splicing"/>
    <isoform>
        <id>P38117-1</id>
        <name>1</name>
        <sequence type="displayed"/>
    </isoform>
    <isoform>
        <id>P38117-2</id>
        <name>2</name>
        <sequence type="described" ref="VSP_017850"/>
    </isoform>
</comment>
<comment type="tissue specificity">
    <text evidence="12">Abundant in liver, heart and skeletal muscle. A weak expression is seen in the brain, placenta, lung, kidney and pancreas.</text>
</comment>
<comment type="domain">
    <text evidence="5">The recognition loop recognizes a hydrophobic patch at the surface of interacting dehydrogenases and acts as a static anchor at the interface.</text>
</comment>
<comment type="PTM">
    <text evidence="8 9">Methylated. Trimethylation at Lys-200 and Lys-203 may negatively regulate the activity in electron transfer from acyl-CoA dehydrogenases.</text>
</comment>
<comment type="disease" evidence="3 11">
    <disease id="DI-00514">
        <name>Glutaric aciduria 2B</name>
        <acronym>GA2B</acronym>
        <description>An autosomal recessively inherited disorder of fatty acid, amino acid, and choline metabolism. It is characterized by multiple acyl-CoA dehydrogenase deficiencies resulting in large excretion not only of glutaric acid, but also of lactic, ethylmalonic, butyric, isobutyric, 2-methyl-butyric, and isovaleric acids.</description>
        <dbReference type="MIM" id="231680"/>
    </disease>
    <text>The disease is caused by variants affecting the gene represented in this entry.</text>
</comment>
<comment type="similarity">
    <text evidence="18">Belongs to the ETF beta-subunit/FixA family.</text>
</comment>
<keyword id="KW-0002">3D-structure</keyword>
<keyword id="KW-0007">Acetylation</keyword>
<keyword id="KW-0025">Alternative splicing</keyword>
<keyword id="KW-0225">Disease variant</keyword>
<keyword id="KW-0249">Electron transport</keyword>
<keyword id="KW-0316">Glutaricaciduria</keyword>
<keyword id="KW-0488">Methylation</keyword>
<keyword id="KW-0496">Mitochondrion</keyword>
<keyword id="KW-0597">Phosphoprotein</keyword>
<keyword id="KW-1267">Proteomics identification</keyword>
<keyword id="KW-1185">Reference proteome</keyword>
<keyword id="KW-0813">Transport</keyword>
<organism>
    <name type="scientific">Homo sapiens</name>
    <name type="common">Human</name>
    <dbReference type="NCBI Taxonomy" id="9606"/>
    <lineage>
        <taxon>Eukaryota</taxon>
        <taxon>Metazoa</taxon>
        <taxon>Chordata</taxon>
        <taxon>Craniata</taxon>
        <taxon>Vertebrata</taxon>
        <taxon>Euteleostomi</taxon>
        <taxon>Mammalia</taxon>
        <taxon>Eutheria</taxon>
        <taxon>Euarchontoglires</taxon>
        <taxon>Primates</taxon>
        <taxon>Haplorrhini</taxon>
        <taxon>Catarrhini</taxon>
        <taxon>Hominidae</taxon>
        <taxon>Homo</taxon>
    </lineage>
</organism>